<gene>
    <name evidence="1" type="primary">coaD</name>
    <name type="ordered locus">LBA0836</name>
</gene>
<reference key="1">
    <citation type="journal article" date="2005" name="Proc. Natl. Acad. Sci. U.S.A.">
        <title>Complete genome sequence of the probiotic lactic acid bacterium Lactobacillus acidophilus NCFM.</title>
        <authorList>
            <person name="Altermann E."/>
            <person name="Russell W.M."/>
            <person name="Azcarate-Peril M.A."/>
            <person name="Barrangou R."/>
            <person name="Buck B.L."/>
            <person name="McAuliffe O."/>
            <person name="Souther N."/>
            <person name="Dobson A."/>
            <person name="Duong T."/>
            <person name="Callanan M."/>
            <person name="Lick S."/>
            <person name="Hamrick A."/>
            <person name="Cano R."/>
            <person name="Klaenhammer T.R."/>
        </authorList>
    </citation>
    <scope>NUCLEOTIDE SEQUENCE [LARGE SCALE GENOMIC DNA]</scope>
    <source>
        <strain>ATCC 700396 / NCK56 / N2 / NCFM</strain>
    </source>
</reference>
<dbReference type="EC" id="2.7.7.3" evidence="1"/>
<dbReference type="EMBL" id="CP000033">
    <property type="protein sequence ID" value="AAV42697.1"/>
    <property type="molecule type" value="Genomic_DNA"/>
</dbReference>
<dbReference type="RefSeq" id="WP_003546847.1">
    <property type="nucleotide sequence ID" value="NC_006814.3"/>
</dbReference>
<dbReference type="RefSeq" id="YP_193728.1">
    <property type="nucleotide sequence ID" value="NC_006814.3"/>
</dbReference>
<dbReference type="SMR" id="Q5FKS7"/>
<dbReference type="STRING" id="272621.LBA0836"/>
<dbReference type="GeneID" id="93290041"/>
<dbReference type="KEGG" id="lac:LBA0836"/>
<dbReference type="PATRIC" id="fig|272621.13.peg.798"/>
<dbReference type="eggNOG" id="COG0669">
    <property type="taxonomic scope" value="Bacteria"/>
</dbReference>
<dbReference type="HOGENOM" id="CLU_100149_0_1_9"/>
<dbReference type="OrthoDB" id="9806661at2"/>
<dbReference type="BioCyc" id="LACI272621:G1G49-847-MONOMER"/>
<dbReference type="UniPathway" id="UPA00241">
    <property type="reaction ID" value="UER00355"/>
</dbReference>
<dbReference type="Proteomes" id="UP000006381">
    <property type="component" value="Chromosome"/>
</dbReference>
<dbReference type="GO" id="GO:0005737">
    <property type="term" value="C:cytoplasm"/>
    <property type="evidence" value="ECO:0007669"/>
    <property type="project" value="UniProtKB-SubCell"/>
</dbReference>
<dbReference type="GO" id="GO:0005524">
    <property type="term" value="F:ATP binding"/>
    <property type="evidence" value="ECO:0007669"/>
    <property type="project" value="UniProtKB-KW"/>
</dbReference>
<dbReference type="GO" id="GO:0004595">
    <property type="term" value="F:pantetheine-phosphate adenylyltransferase activity"/>
    <property type="evidence" value="ECO:0007669"/>
    <property type="project" value="UniProtKB-UniRule"/>
</dbReference>
<dbReference type="GO" id="GO:0015937">
    <property type="term" value="P:coenzyme A biosynthetic process"/>
    <property type="evidence" value="ECO:0007669"/>
    <property type="project" value="UniProtKB-UniRule"/>
</dbReference>
<dbReference type="CDD" id="cd02163">
    <property type="entry name" value="PPAT"/>
    <property type="match status" value="1"/>
</dbReference>
<dbReference type="Gene3D" id="3.40.50.620">
    <property type="entry name" value="HUPs"/>
    <property type="match status" value="1"/>
</dbReference>
<dbReference type="HAMAP" id="MF_00151">
    <property type="entry name" value="PPAT_bact"/>
    <property type="match status" value="1"/>
</dbReference>
<dbReference type="InterPro" id="IPR004821">
    <property type="entry name" value="Cyt_trans-like"/>
</dbReference>
<dbReference type="InterPro" id="IPR001980">
    <property type="entry name" value="PPAT"/>
</dbReference>
<dbReference type="InterPro" id="IPR014729">
    <property type="entry name" value="Rossmann-like_a/b/a_fold"/>
</dbReference>
<dbReference type="NCBIfam" id="TIGR01510">
    <property type="entry name" value="coaD_prev_kdtB"/>
    <property type="match status" value="1"/>
</dbReference>
<dbReference type="NCBIfam" id="TIGR00125">
    <property type="entry name" value="cyt_tran_rel"/>
    <property type="match status" value="1"/>
</dbReference>
<dbReference type="PANTHER" id="PTHR21342">
    <property type="entry name" value="PHOSPHOPANTETHEINE ADENYLYLTRANSFERASE"/>
    <property type="match status" value="1"/>
</dbReference>
<dbReference type="PANTHER" id="PTHR21342:SF1">
    <property type="entry name" value="PHOSPHOPANTETHEINE ADENYLYLTRANSFERASE"/>
    <property type="match status" value="1"/>
</dbReference>
<dbReference type="Pfam" id="PF01467">
    <property type="entry name" value="CTP_transf_like"/>
    <property type="match status" value="1"/>
</dbReference>
<dbReference type="PRINTS" id="PR01020">
    <property type="entry name" value="LPSBIOSNTHSS"/>
</dbReference>
<dbReference type="SUPFAM" id="SSF52374">
    <property type="entry name" value="Nucleotidylyl transferase"/>
    <property type="match status" value="1"/>
</dbReference>
<comment type="function">
    <text evidence="1">Reversibly transfers an adenylyl group from ATP to 4'-phosphopantetheine, yielding dephospho-CoA (dPCoA) and pyrophosphate.</text>
</comment>
<comment type="catalytic activity">
    <reaction evidence="1">
        <text>(R)-4'-phosphopantetheine + ATP + H(+) = 3'-dephospho-CoA + diphosphate</text>
        <dbReference type="Rhea" id="RHEA:19801"/>
        <dbReference type="ChEBI" id="CHEBI:15378"/>
        <dbReference type="ChEBI" id="CHEBI:30616"/>
        <dbReference type="ChEBI" id="CHEBI:33019"/>
        <dbReference type="ChEBI" id="CHEBI:57328"/>
        <dbReference type="ChEBI" id="CHEBI:61723"/>
        <dbReference type="EC" id="2.7.7.3"/>
    </reaction>
</comment>
<comment type="cofactor">
    <cofactor evidence="1">
        <name>Mg(2+)</name>
        <dbReference type="ChEBI" id="CHEBI:18420"/>
    </cofactor>
</comment>
<comment type="pathway">
    <text evidence="1">Cofactor biosynthesis; coenzyme A biosynthesis; CoA from (R)-pantothenate: step 4/5.</text>
</comment>
<comment type="subunit">
    <text evidence="1">Homohexamer.</text>
</comment>
<comment type="subcellular location">
    <subcellularLocation>
        <location evidence="1">Cytoplasm</location>
    </subcellularLocation>
</comment>
<comment type="similarity">
    <text evidence="1">Belongs to the bacterial CoaD family.</text>
</comment>
<keyword id="KW-0067">ATP-binding</keyword>
<keyword id="KW-0173">Coenzyme A biosynthesis</keyword>
<keyword id="KW-0963">Cytoplasm</keyword>
<keyword id="KW-0460">Magnesium</keyword>
<keyword id="KW-0547">Nucleotide-binding</keyword>
<keyword id="KW-0548">Nucleotidyltransferase</keyword>
<keyword id="KW-1185">Reference proteome</keyword>
<keyword id="KW-0808">Transferase</keyword>
<evidence type="ECO:0000255" key="1">
    <source>
        <dbReference type="HAMAP-Rule" id="MF_00151"/>
    </source>
</evidence>
<feature type="chain" id="PRO_1000011162" description="Phosphopantetheine adenylyltransferase">
    <location>
        <begin position="1"/>
        <end position="161"/>
    </location>
</feature>
<feature type="binding site" evidence="1">
    <location>
        <begin position="9"/>
        <end position="10"/>
    </location>
    <ligand>
        <name>ATP</name>
        <dbReference type="ChEBI" id="CHEBI:30616"/>
    </ligand>
</feature>
<feature type="binding site" evidence="1">
    <location>
        <position position="9"/>
    </location>
    <ligand>
        <name>substrate</name>
    </ligand>
</feature>
<feature type="binding site" evidence="1">
    <location>
        <position position="17"/>
    </location>
    <ligand>
        <name>ATP</name>
        <dbReference type="ChEBI" id="CHEBI:30616"/>
    </ligand>
</feature>
<feature type="binding site" evidence="1">
    <location>
        <position position="41"/>
    </location>
    <ligand>
        <name>substrate</name>
    </ligand>
</feature>
<feature type="binding site" evidence="1">
    <location>
        <position position="74"/>
    </location>
    <ligand>
        <name>substrate</name>
    </ligand>
</feature>
<feature type="binding site" evidence="1">
    <location>
        <position position="88"/>
    </location>
    <ligand>
        <name>substrate</name>
    </ligand>
</feature>
<feature type="binding site" evidence="1">
    <location>
        <begin position="89"/>
        <end position="91"/>
    </location>
    <ligand>
        <name>ATP</name>
        <dbReference type="ChEBI" id="CHEBI:30616"/>
    </ligand>
</feature>
<feature type="binding site" evidence="1">
    <location>
        <position position="99"/>
    </location>
    <ligand>
        <name>ATP</name>
        <dbReference type="ChEBI" id="CHEBI:30616"/>
    </ligand>
</feature>
<feature type="binding site" evidence="1">
    <location>
        <begin position="124"/>
        <end position="130"/>
    </location>
    <ligand>
        <name>ATP</name>
        <dbReference type="ChEBI" id="CHEBI:30616"/>
    </ligand>
</feature>
<feature type="site" description="Transition state stabilizer" evidence="1">
    <location>
        <position position="17"/>
    </location>
</feature>
<proteinExistence type="inferred from homology"/>
<organism>
    <name type="scientific">Lactobacillus acidophilus (strain ATCC 700396 / NCK56 / N2 / NCFM)</name>
    <dbReference type="NCBI Taxonomy" id="272621"/>
    <lineage>
        <taxon>Bacteria</taxon>
        <taxon>Bacillati</taxon>
        <taxon>Bacillota</taxon>
        <taxon>Bacilli</taxon>
        <taxon>Lactobacillales</taxon>
        <taxon>Lactobacillaceae</taxon>
        <taxon>Lactobacillus</taxon>
    </lineage>
</organism>
<protein>
    <recommendedName>
        <fullName evidence="1">Phosphopantetheine adenylyltransferase</fullName>
        <ecNumber evidence="1">2.7.7.3</ecNumber>
    </recommendedName>
    <alternativeName>
        <fullName evidence="1">Dephospho-CoA pyrophosphorylase</fullName>
    </alternativeName>
    <alternativeName>
        <fullName evidence="1">Pantetheine-phosphate adenylyltransferase</fullName>
        <shortName evidence="1">PPAT</shortName>
    </alternativeName>
</protein>
<sequence>MTIALFPGSFDPITNGHVETAKKAAQMFDKVFVVAMTNTSKKYLFTAEERTAFAKDALKNISNIEVLEKPEELTVKLAHELKANVIVRGVRNSADFLYEQEIAGINKRLAPDINTVLLFSSPDNSFVASSMIKELARFDEDVSQFLPIKAAKALRKKLRHE</sequence>
<accession>Q5FKS7</accession>
<name>COAD_LACAC</name>